<gene>
    <name type="ordered locus">xcc-b100_1354</name>
</gene>
<evidence type="ECO:0000255" key="1">
    <source>
        <dbReference type="HAMAP-Rule" id="MF_00636"/>
    </source>
</evidence>
<reference key="1">
    <citation type="journal article" date="2008" name="J. Biotechnol.">
        <title>The genome of Xanthomonas campestris pv. campestris B100 and its use for the reconstruction of metabolic pathways involved in xanthan biosynthesis.</title>
        <authorList>
            <person name="Vorhoelter F.-J."/>
            <person name="Schneiker S."/>
            <person name="Goesmann A."/>
            <person name="Krause L."/>
            <person name="Bekel T."/>
            <person name="Kaiser O."/>
            <person name="Linke B."/>
            <person name="Patschkowski T."/>
            <person name="Rueckert C."/>
            <person name="Schmid J."/>
            <person name="Sidhu V.K."/>
            <person name="Sieber V."/>
            <person name="Tauch A."/>
            <person name="Watt S.A."/>
            <person name="Weisshaar B."/>
            <person name="Becker A."/>
            <person name="Niehaus K."/>
            <person name="Puehler A."/>
        </authorList>
    </citation>
    <scope>NUCLEOTIDE SEQUENCE [LARGE SCALE GENOMIC DNA]</scope>
    <source>
        <strain>B100</strain>
    </source>
</reference>
<name>Y1354_XANCB</name>
<feature type="chain" id="PRO_1000130795" description="Nucleotide-binding protein xcc-b100_1354">
    <location>
        <begin position="1"/>
        <end position="282"/>
    </location>
</feature>
<feature type="binding site" evidence="1">
    <location>
        <begin position="5"/>
        <end position="12"/>
    </location>
    <ligand>
        <name>ATP</name>
        <dbReference type="ChEBI" id="CHEBI:30616"/>
    </ligand>
</feature>
<feature type="binding site" evidence="1">
    <location>
        <begin position="57"/>
        <end position="60"/>
    </location>
    <ligand>
        <name>GTP</name>
        <dbReference type="ChEBI" id="CHEBI:37565"/>
    </ligand>
</feature>
<accession>B0RQG9</accession>
<proteinExistence type="inferred from homology"/>
<comment type="function">
    <text evidence="1">Displays ATPase and GTPase activities.</text>
</comment>
<comment type="similarity">
    <text evidence="1">Belongs to the RapZ-like family.</text>
</comment>
<sequence length="282" mass="32064">MIVSGLSGSGKSVALKTFEDLDYYCSDNLPVELLPDFVRSRLRGNPLGDQRLAVGIDVRSRSDLTQLAQWRQAAQEYGIEARLLFFEASDEALLKRYADTRRRHPLSQLGLALPEAITRERELTAPLRAQADAIIDTSALNVHQLRRRVVTEFALGNSDRLSLLFESFAYKRGVPAEADFVFDARVLPNPHWDPELRPLTGRDAGVRDYLDKEPDVIRYSAQIVDLLDTWLPRLRNDTRSYVTIAFGCTGGKHRSVYLAERMARHAREQGWPEVATFHREQD</sequence>
<keyword id="KW-0067">ATP-binding</keyword>
<keyword id="KW-0342">GTP-binding</keyword>
<keyword id="KW-0547">Nucleotide-binding</keyword>
<organism>
    <name type="scientific">Xanthomonas campestris pv. campestris (strain B100)</name>
    <dbReference type="NCBI Taxonomy" id="509169"/>
    <lineage>
        <taxon>Bacteria</taxon>
        <taxon>Pseudomonadati</taxon>
        <taxon>Pseudomonadota</taxon>
        <taxon>Gammaproteobacteria</taxon>
        <taxon>Lysobacterales</taxon>
        <taxon>Lysobacteraceae</taxon>
        <taxon>Xanthomonas</taxon>
    </lineage>
</organism>
<protein>
    <recommendedName>
        <fullName evidence="1">Nucleotide-binding protein xcc-b100_1354</fullName>
    </recommendedName>
</protein>
<dbReference type="EMBL" id="AM920689">
    <property type="protein sequence ID" value="CAP50704.1"/>
    <property type="molecule type" value="Genomic_DNA"/>
</dbReference>
<dbReference type="SMR" id="B0RQG9"/>
<dbReference type="KEGG" id="xca:xcc-b100_1354"/>
<dbReference type="HOGENOM" id="CLU_059558_1_1_6"/>
<dbReference type="Proteomes" id="UP000001188">
    <property type="component" value="Chromosome"/>
</dbReference>
<dbReference type="GO" id="GO:0005524">
    <property type="term" value="F:ATP binding"/>
    <property type="evidence" value="ECO:0007669"/>
    <property type="project" value="UniProtKB-UniRule"/>
</dbReference>
<dbReference type="GO" id="GO:0005525">
    <property type="term" value="F:GTP binding"/>
    <property type="evidence" value="ECO:0007669"/>
    <property type="project" value="UniProtKB-UniRule"/>
</dbReference>
<dbReference type="HAMAP" id="MF_00636">
    <property type="entry name" value="RapZ_like"/>
    <property type="match status" value="1"/>
</dbReference>
<dbReference type="InterPro" id="IPR027417">
    <property type="entry name" value="P-loop_NTPase"/>
</dbReference>
<dbReference type="InterPro" id="IPR005337">
    <property type="entry name" value="RapZ-like"/>
</dbReference>
<dbReference type="InterPro" id="IPR053930">
    <property type="entry name" value="RapZ-like_N"/>
</dbReference>
<dbReference type="InterPro" id="IPR053931">
    <property type="entry name" value="RapZ_C"/>
</dbReference>
<dbReference type="NCBIfam" id="NF003828">
    <property type="entry name" value="PRK05416.1"/>
    <property type="match status" value="1"/>
</dbReference>
<dbReference type="PANTHER" id="PTHR30448">
    <property type="entry name" value="RNASE ADAPTER PROTEIN RAPZ"/>
    <property type="match status" value="1"/>
</dbReference>
<dbReference type="PANTHER" id="PTHR30448:SF0">
    <property type="entry name" value="RNASE ADAPTER PROTEIN RAPZ"/>
    <property type="match status" value="1"/>
</dbReference>
<dbReference type="Pfam" id="PF22740">
    <property type="entry name" value="PapZ_C"/>
    <property type="match status" value="1"/>
</dbReference>
<dbReference type="Pfam" id="PF03668">
    <property type="entry name" value="RapZ-like_N"/>
    <property type="match status" value="1"/>
</dbReference>
<dbReference type="PIRSF" id="PIRSF005052">
    <property type="entry name" value="P-loopkin"/>
    <property type="match status" value="1"/>
</dbReference>
<dbReference type="SUPFAM" id="SSF52540">
    <property type="entry name" value="P-loop containing nucleoside triphosphate hydrolases"/>
    <property type="match status" value="1"/>
</dbReference>